<reference key="1">
    <citation type="journal article" date="1996" name="J. Virol.">
        <title>Determination and analysis of the complete nucleotide sequence of human herpesvirus.</title>
        <authorList>
            <person name="Nicholas J."/>
        </authorList>
    </citation>
    <scope>NUCLEOTIDE SEQUENCE [LARGE SCALE GENOMIC DNA]</scope>
</reference>
<proteinExistence type="inferred from homology"/>
<comment type="function">
    <text evidence="1">Excises uracil residues from the DNA which can arise as a result of misincorporation of dUMP residues by DNA polymerase or deamination of cytosines. Therefore may reduce deleterious uracil incorporation into the viral genome, particularly in terminally differentiated cells which lack DNA repair enzymes.</text>
</comment>
<comment type="catalytic activity">
    <reaction evidence="1">
        <text>Hydrolyzes single-stranded DNA or mismatched double-stranded DNA and polynucleotides, releasing free uracil.</text>
        <dbReference type="EC" id="3.2.2.27"/>
    </reaction>
</comment>
<comment type="subcellular location">
    <subcellularLocation>
        <location evidence="1">Host nucleus</location>
    </subcellularLocation>
</comment>
<comment type="similarity">
    <text evidence="1">Belongs to the uracil-DNA glycosylase (UDG) superfamily. UNG family.</text>
</comment>
<sequence length="254" mass="29006">MALLQWMLENISDDNSIKMSLEEQHETFQINVKWLKFLNLSDSDIVQLQNVYKLVQRDRERLIIYPDPQNVHSWSYLCSPEEIKVIIVGQDPYPDGRGHGLAFSTVRGCSPPNSLKTIFAELERTIENFKAPAHGSLKSWCAQGVLLLNTVFTVIRGVPMSHEAIGWQVLSNRIINQLSEKMQNLVFMLWGSQARKLVSLIDSKKHLILECAHPSPRTKGSKTPFIGCGHFLKANKYLQIHNKCPIDWNITNDL</sequence>
<dbReference type="EC" id="3.2.2.27" evidence="1"/>
<dbReference type="EMBL" id="U43400">
    <property type="protein sequence ID" value="AAC54743.1"/>
    <property type="molecule type" value="Genomic_DNA"/>
</dbReference>
<dbReference type="PIR" id="T41983">
    <property type="entry name" value="T41983"/>
</dbReference>
<dbReference type="RefSeq" id="YP_073819.1">
    <property type="nucleotide sequence ID" value="NC_001716.2"/>
</dbReference>
<dbReference type="SMR" id="P50639"/>
<dbReference type="DNASU" id="3289537"/>
<dbReference type="GeneID" id="3289537"/>
<dbReference type="KEGG" id="vg:3289537"/>
<dbReference type="Proteomes" id="UP000009246">
    <property type="component" value="Segment"/>
</dbReference>
<dbReference type="GO" id="GO:0042025">
    <property type="term" value="C:host cell nucleus"/>
    <property type="evidence" value="ECO:0007669"/>
    <property type="project" value="UniProtKB-SubCell"/>
</dbReference>
<dbReference type="GO" id="GO:0004844">
    <property type="term" value="F:uracil DNA N-glycosylase activity"/>
    <property type="evidence" value="ECO:0007669"/>
    <property type="project" value="UniProtKB-EC"/>
</dbReference>
<dbReference type="GO" id="GO:0097510">
    <property type="term" value="P:base-excision repair, AP site formation via deaminated base removal"/>
    <property type="evidence" value="ECO:0007669"/>
    <property type="project" value="TreeGrafter"/>
</dbReference>
<dbReference type="CDD" id="cd10027">
    <property type="entry name" value="UDG-F1-like"/>
    <property type="match status" value="1"/>
</dbReference>
<dbReference type="Gene3D" id="3.40.470.10">
    <property type="entry name" value="Uracil-DNA glycosylase-like domain"/>
    <property type="match status" value="1"/>
</dbReference>
<dbReference type="HAMAP" id="MF_00148">
    <property type="entry name" value="UDG"/>
    <property type="match status" value="1"/>
</dbReference>
<dbReference type="InterPro" id="IPR002043">
    <property type="entry name" value="UDG_fam1"/>
</dbReference>
<dbReference type="InterPro" id="IPR018085">
    <property type="entry name" value="Ura-DNA_Glyclase_AS"/>
</dbReference>
<dbReference type="InterPro" id="IPR005122">
    <property type="entry name" value="Uracil-DNA_glycosylase-like"/>
</dbReference>
<dbReference type="InterPro" id="IPR036895">
    <property type="entry name" value="Uracil-DNA_glycosylase-like_sf"/>
</dbReference>
<dbReference type="NCBIfam" id="NF003589">
    <property type="entry name" value="PRK05254.1-2"/>
    <property type="match status" value="1"/>
</dbReference>
<dbReference type="NCBIfam" id="NF003592">
    <property type="entry name" value="PRK05254.1-5"/>
    <property type="match status" value="1"/>
</dbReference>
<dbReference type="NCBIfam" id="TIGR00628">
    <property type="entry name" value="ung"/>
    <property type="match status" value="1"/>
</dbReference>
<dbReference type="PANTHER" id="PTHR11264">
    <property type="entry name" value="URACIL-DNA GLYCOSYLASE"/>
    <property type="match status" value="1"/>
</dbReference>
<dbReference type="PANTHER" id="PTHR11264:SF0">
    <property type="entry name" value="URACIL-DNA GLYCOSYLASE"/>
    <property type="match status" value="1"/>
</dbReference>
<dbReference type="Pfam" id="PF03167">
    <property type="entry name" value="UDG"/>
    <property type="match status" value="1"/>
</dbReference>
<dbReference type="SMART" id="SM00986">
    <property type="entry name" value="UDG"/>
    <property type="match status" value="1"/>
</dbReference>
<dbReference type="SMART" id="SM00987">
    <property type="entry name" value="UreE_C"/>
    <property type="match status" value="1"/>
</dbReference>
<dbReference type="SUPFAM" id="SSF52141">
    <property type="entry name" value="Uracil-DNA glycosylase-like"/>
    <property type="match status" value="1"/>
</dbReference>
<dbReference type="PROSITE" id="PS00130">
    <property type="entry name" value="U_DNA_GLYCOSYLASE"/>
    <property type="match status" value="1"/>
</dbReference>
<keyword id="KW-0227">DNA damage</keyword>
<keyword id="KW-0234">DNA repair</keyword>
<keyword id="KW-1048">Host nucleus</keyword>
<keyword id="KW-0378">Hydrolase</keyword>
<keyword id="KW-1185">Reference proteome</keyword>
<evidence type="ECO:0000255" key="1">
    <source>
        <dbReference type="HAMAP-Rule" id="MF_04046"/>
    </source>
</evidence>
<gene>
    <name type="primary">U81</name>
</gene>
<organismHost>
    <name type="scientific">Homo sapiens</name>
    <name type="common">Human</name>
    <dbReference type="NCBI Taxonomy" id="9606"/>
</organismHost>
<feature type="chain" id="PRO_0000176190" description="Uracil-DNA glycosylase">
    <location>
        <begin position="1"/>
        <end position="254"/>
    </location>
</feature>
<feature type="active site" description="Proton acceptor" evidence="1">
    <location>
        <position position="91"/>
    </location>
</feature>
<name>UNG_HHV7J</name>
<accession>P50639</accession>
<organism>
    <name type="scientific">Human herpesvirus 7 (strain JI)</name>
    <name type="common">HHV-7</name>
    <name type="synonym">Human T lymphotropic virus</name>
    <dbReference type="NCBI Taxonomy" id="57278"/>
    <lineage>
        <taxon>Viruses</taxon>
        <taxon>Duplodnaviria</taxon>
        <taxon>Heunggongvirae</taxon>
        <taxon>Peploviricota</taxon>
        <taxon>Herviviricetes</taxon>
        <taxon>Herpesvirales</taxon>
        <taxon>Orthoherpesviridae</taxon>
        <taxon>Betaherpesvirinae</taxon>
        <taxon>Roseolovirus</taxon>
        <taxon>Roseolovirus humanbeta7</taxon>
        <taxon>Human betaherpesvirus 7</taxon>
    </lineage>
</organism>
<protein>
    <recommendedName>
        <fullName evidence="1">Uracil-DNA glycosylase</fullName>
        <shortName evidence="1">UDG</shortName>
        <ecNumber evidence="1">3.2.2.27</ecNumber>
    </recommendedName>
    <alternativeName>
        <fullName evidence="1">UNG</fullName>
    </alternativeName>
</protein>